<evidence type="ECO:0000255" key="1">
    <source>
        <dbReference type="PROSITE-ProRule" id="PRU00145"/>
    </source>
</evidence>
<evidence type="ECO:0000256" key="2">
    <source>
        <dbReference type="SAM" id="MobiDB-lite"/>
    </source>
</evidence>
<evidence type="ECO:0000269" key="3">
    <source>
    </source>
</evidence>
<evidence type="ECO:0000269" key="4">
    <source>
    </source>
</evidence>
<evidence type="ECO:0000269" key="5">
    <source>
    </source>
</evidence>
<evidence type="ECO:0000269" key="6">
    <source>
    </source>
</evidence>
<evidence type="ECO:0000269" key="7">
    <source>
    </source>
</evidence>
<evidence type="ECO:0000269" key="8">
    <source>
    </source>
</evidence>
<evidence type="ECO:0000269" key="9">
    <source>
    </source>
</evidence>
<evidence type="ECO:0000303" key="10">
    <source>
    </source>
</evidence>
<evidence type="ECO:0000305" key="11"/>
<evidence type="ECO:0000305" key="12">
    <source>
    </source>
</evidence>
<evidence type="ECO:0000305" key="13">
    <source>
    </source>
</evidence>
<evidence type="ECO:0007744" key="14">
    <source>
    </source>
</evidence>
<evidence type="ECO:0007744" key="15">
    <source>
    </source>
</evidence>
<evidence type="ECO:0007744" key="16">
    <source>
    </source>
</evidence>
<evidence type="ECO:0007744" key="17">
    <source>
    </source>
</evidence>
<gene>
    <name evidence="10" type="primary">OSH2</name>
    <name type="ordered locus">YDL019C</name>
    <name type="ORF">D2845</name>
</gene>
<proteinExistence type="evidence at protein level"/>
<feature type="initiator methionine" description="Removed" evidence="14">
    <location>
        <position position="1"/>
    </location>
</feature>
<feature type="chain" id="PRO_0000100388" description="Oxysterol-binding protein homolog 2">
    <location>
        <begin position="2"/>
        <end position="1283"/>
    </location>
</feature>
<feature type="repeat" description="ANK 1">
    <location>
        <begin position="106"/>
        <end position="134"/>
    </location>
</feature>
<feature type="repeat" description="ANK 2">
    <location>
        <begin position="206"/>
        <end position="235"/>
    </location>
</feature>
<feature type="domain" description="PH" evidence="1">
    <location>
        <begin position="289"/>
        <end position="386"/>
    </location>
</feature>
<feature type="region of interest" description="Disordered" evidence="2">
    <location>
        <begin position="504"/>
        <end position="571"/>
    </location>
</feature>
<feature type="region of interest" description="Disordered" evidence="2">
    <location>
        <begin position="702"/>
        <end position="721"/>
    </location>
</feature>
<feature type="region of interest" description="Disordered" evidence="2">
    <location>
        <begin position="767"/>
        <end position="834"/>
    </location>
</feature>
<feature type="region of interest" description="OSBP-related domain (ORD)" evidence="11">
    <location>
        <begin position="897"/>
        <end position="1268"/>
    </location>
</feature>
<feature type="short sequence motif" description="FFAT">
    <location>
        <begin position="745"/>
        <end position="751"/>
    </location>
</feature>
<feature type="compositionally biased region" description="Polar residues" evidence="2">
    <location>
        <begin position="504"/>
        <end position="518"/>
    </location>
</feature>
<feature type="compositionally biased region" description="Polar residues" evidence="2">
    <location>
        <begin position="530"/>
        <end position="551"/>
    </location>
</feature>
<feature type="compositionally biased region" description="Acidic residues" evidence="2">
    <location>
        <begin position="554"/>
        <end position="568"/>
    </location>
</feature>
<feature type="compositionally biased region" description="Basic and acidic residues" evidence="2">
    <location>
        <begin position="707"/>
        <end position="716"/>
    </location>
</feature>
<feature type="compositionally biased region" description="Basic and acidic residues" evidence="2">
    <location>
        <begin position="791"/>
        <end position="810"/>
    </location>
</feature>
<feature type="compositionally biased region" description="Basic and acidic residues" evidence="2">
    <location>
        <begin position="818"/>
        <end position="834"/>
    </location>
</feature>
<feature type="modified residue" description="N-acetylserine" evidence="14">
    <location>
        <position position="2"/>
    </location>
</feature>
<feature type="modified residue" description="Phosphoserine" evidence="14">
    <location>
        <position position="7"/>
    </location>
</feature>
<feature type="modified residue" description="Phosphoserine" evidence="15 16">
    <location>
        <position position="422"/>
    </location>
</feature>
<feature type="modified residue" description="Phosphoserine" evidence="17">
    <location>
        <position position="445"/>
    </location>
</feature>
<feature type="modified residue" description="Phosphoserine" evidence="17">
    <location>
        <position position="451"/>
    </location>
</feature>
<feature type="modified residue" description="Phosphoserine" evidence="17">
    <location>
        <position position="455"/>
    </location>
</feature>
<feature type="modified residue" description="Phosphoserine" evidence="17">
    <location>
        <position position="458"/>
    </location>
</feature>
<feature type="modified residue" description="Phosphoserine" evidence="17">
    <location>
        <position position="459"/>
    </location>
</feature>
<feature type="modified residue" description="Phosphoserine" evidence="17">
    <location>
        <position position="486"/>
    </location>
</feature>
<feature type="modified residue" description="Phosphothreonine" evidence="16">
    <location>
        <position position="488"/>
    </location>
</feature>
<feature type="modified residue" description="Phosphoserine" evidence="17">
    <location>
        <position position="512"/>
    </location>
</feature>
<feature type="modified residue" description="Phosphoserine" evidence="17">
    <location>
        <position position="515"/>
    </location>
</feature>
<feature type="modified residue" description="Phosphoserine" evidence="17">
    <location>
        <position position="717"/>
    </location>
</feature>
<feature type="modified residue" description="Phosphothreonine" evidence="17">
    <location>
        <position position="783"/>
    </location>
</feature>
<feature type="modified residue" description="Phosphoserine" evidence="16 17">
    <location>
        <position position="787"/>
    </location>
</feature>
<feature type="modified residue" description="Phosphoserine" evidence="17">
    <location>
        <position position="825"/>
    </location>
</feature>
<feature type="modified residue" description="Phosphoserine" evidence="16">
    <location>
        <position position="1151"/>
    </location>
</feature>
<keyword id="KW-0007">Acetylation</keyword>
<keyword id="KW-0040">ANK repeat</keyword>
<keyword id="KW-1003">Cell membrane</keyword>
<keyword id="KW-0256">Endoplasmic reticulum</keyword>
<keyword id="KW-0445">Lipid transport</keyword>
<keyword id="KW-0446">Lipid-binding</keyword>
<keyword id="KW-0472">Membrane</keyword>
<keyword id="KW-0597">Phosphoprotein</keyword>
<keyword id="KW-1185">Reference proteome</keyword>
<keyword id="KW-0677">Repeat</keyword>
<keyword id="KW-0813">Transport</keyword>
<reference key="1">
    <citation type="journal article" date="1997" name="Nature">
        <title>The nucleotide sequence of Saccharomyces cerevisiae chromosome IV.</title>
        <authorList>
            <person name="Jacq C."/>
            <person name="Alt-Moerbe J."/>
            <person name="Andre B."/>
            <person name="Arnold W."/>
            <person name="Bahr A."/>
            <person name="Ballesta J.P.G."/>
            <person name="Bargues M."/>
            <person name="Baron L."/>
            <person name="Becker A."/>
            <person name="Biteau N."/>
            <person name="Bloecker H."/>
            <person name="Blugeon C."/>
            <person name="Boskovic J."/>
            <person name="Brandt P."/>
            <person name="Brueckner M."/>
            <person name="Buitrago M.J."/>
            <person name="Coster F."/>
            <person name="Delaveau T."/>
            <person name="del Rey F."/>
            <person name="Dujon B."/>
            <person name="Eide L.G."/>
            <person name="Garcia-Cantalejo J.M."/>
            <person name="Goffeau A."/>
            <person name="Gomez-Peris A."/>
            <person name="Granotier C."/>
            <person name="Hanemann V."/>
            <person name="Hankeln T."/>
            <person name="Hoheisel J.D."/>
            <person name="Jaeger W."/>
            <person name="Jimenez A."/>
            <person name="Jonniaux J.-L."/>
            <person name="Kraemer C."/>
            <person name="Kuester H."/>
            <person name="Laamanen P."/>
            <person name="Legros Y."/>
            <person name="Louis E.J."/>
            <person name="Moeller-Rieker S."/>
            <person name="Monnet A."/>
            <person name="Moro M."/>
            <person name="Mueller-Auer S."/>
            <person name="Nussbaumer B."/>
            <person name="Paricio N."/>
            <person name="Paulin L."/>
            <person name="Perea J."/>
            <person name="Perez-Alonso M."/>
            <person name="Perez-Ortin J.E."/>
            <person name="Pohl T.M."/>
            <person name="Prydz H."/>
            <person name="Purnelle B."/>
            <person name="Rasmussen S.W."/>
            <person name="Remacha M.A."/>
            <person name="Revuelta J.L."/>
            <person name="Rieger M."/>
            <person name="Salom D."/>
            <person name="Saluz H.P."/>
            <person name="Saiz J.E."/>
            <person name="Saren A.-M."/>
            <person name="Schaefer M."/>
            <person name="Scharfe M."/>
            <person name="Schmidt E.R."/>
            <person name="Schneider C."/>
            <person name="Scholler P."/>
            <person name="Schwarz S."/>
            <person name="Soler-Mira A."/>
            <person name="Urrestarazu L.A."/>
            <person name="Verhasselt P."/>
            <person name="Vissers S."/>
            <person name="Voet M."/>
            <person name="Volckaert G."/>
            <person name="Wagner G."/>
            <person name="Wambutt R."/>
            <person name="Wedler E."/>
            <person name="Wedler H."/>
            <person name="Woelfl S."/>
            <person name="Harris D.E."/>
            <person name="Bowman S."/>
            <person name="Brown D."/>
            <person name="Churcher C.M."/>
            <person name="Connor R."/>
            <person name="Dedman K."/>
            <person name="Gentles S."/>
            <person name="Hamlin N."/>
            <person name="Hunt S."/>
            <person name="Jones L."/>
            <person name="McDonald S."/>
            <person name="Murphy L.D."/>
            <person name="Niblett D."/>
            <person name="Odell C."/>
            <person name="Oliver K."/>
            <person name="Rajandream M.A."/>
            <person name="Richards C."/>
            <person name="Shore L."/>
            <person name="Walsh S.V."/>
            <person name="Barrell B.G."/>
            <person name="Dietrich F.S."/>
            <person name="Mulligan J.T."/>
            <person name="Allen E."/>
            <person name="Araujo R."/>
            <person name="Aviles E."/>
            <person name="Berno A."/>
            <person name="Carpenter J."/>
            <person name="Chen E."/>
            <person name="Cherry J.M."/>
            <person name="Chung E."/>
            <person name="Duncan M."/>
            <person name="Hunicke-Smith S."/>
            <person name="Hyman R.W."/>
            <person name="Komp C."/>
            <person name="Lashkari D."/>
            <person name="Lew H."/>
            <person name="Lin D."/>
            <person name="Mosedale D."/>
            <person name="Nakahara K."/>
            <person name="Namath A."/>
            <person name="Oefner P."/>
            <person name="Oh C."/>
            <person name="Petel F.X."/>
            <person name="Roberts D."/>
            <person name="Schramm S."/>
            <person name="Schroeder M."/>
            <person name="Shogren T."/>
            <person name="Shroff N."/>
            <person name="Winant A."/>
            <person name="Yelton M.A."/>
            <person name="Botstein D."/>
            <person name="Davis R.W."/>
            <person name="Johnston M."/>
            <person name="Andrews S."/>
            <person name="Brinkman R."/>
            <person name="Cooper J."/>
            <person name="Ding H."/>
            <person name="Du Z."/>
            <person name="Favello A."/>
            <person name="Fulton L."/>
            <person name="Gattung S."/>
            <person name="Greco T."/>
            <person name="Hallsworth K."/>
            <person name="Hawkins J."/>
            <person name="Hillier L.W."/>
            <person name="Jier M."/>
            <person name="Johnson D."/>
            <person name="Johnston L."/>
            <person name="Kirsten J."/>
            <person name="Kucaba T."/>
            <person name="Langston Y."/>
            <person name="Latreille P."/>
            <person name="Le T."/>
            <person name="Mardis E."/>
            <person name="Menezes S."/>
            <person name="Miller N."/>
            <person name="Nhan M."/>
            <person name="Pauley A."/>
            <person name="Peluso D."/>
            <person name="Rifkin L."/>
            <person name="Riles L."/>
            <person name="Taich A."/>
            <person name="Trevaskis E."/>
            <person name="Vignati D."/>
            <person name="Wilcox L."/>
            <person name="Wohldman P."/>
            <person name="Vaudin M."/>
            <person name="Wilson R."/>
            <person name="Waterston R."/>
            <person name="Albermann K."/>
            <person name="Hani J."/>
            <person name="Heumann K."/>
            <person name="Kleine K."/>
            <person name="Mewes H.-W."/>
            <person name="Zollner A."/>
            <person name="Zaccaria P."/>
        </authorList>
    </citation>
    <scope>NUCLEOTIDE SEQUENCE [LARGE SCALE GENOMIC DNA]</scope>
    <source>
        <strain>ATCC 204508 / S288c</strain>
    </source>
</reference>
<reference key="2">
    <citation type="journal article" date="2014" name="G3 (Bethesda)">
        <title>The reference genome sequence of Saccharomyces cerevisiae: Then and now.</title>
        <authorList>
            <person name="Engel S.R."/>
            <person name="Dietrich F.S."/>
            <person name="Fisk D.G."/>
            <person name="Binkley G."/>
            <person name="Balakrishnan R."/>
            <person name="Costanzo M.C."/>
            <person name="Dwight S.S."/>
            <person name="Hitz B.C."/>
            <person name="Karra K."/>
            <person name="Nash R.S."/>
            <person name="Weng S."/>
            <person name="Wong E.D."/>
            <person name="Lloyd P."/>
            <person name="Skrzypek M.S."/>
            <person name="Miyasato S.R."/>
            <person name="Simison M."/>
            <person name="Cherry J.M."/>
        </authorList>
    </citation>
    <scope>GENOME REANNOTATION</scope>
    <source>
        <strain>ATCC 204508 / S288c</strain>
    </source>
</reference>
<reference key="3">
    <citation type="journal article" date="2001" name="Mol. Biol. Cell">
        <title>Dual targeting of Osh1p, a yeast homologue of oxysterol-binding protein, to both the Golgi and the nucleus-vacuole junction.</title>
        <authorList>
            <person name="Levine T.P."/>
            <person name="Munro S."/>
        </authorList>
    </citation>
    <scope>SUBCELLULAR LOCATION</scope>
</reference>
<reference key="4">
    <citation type="journal article" date="2001" name="Genetics">
        <title>Overlapping functions of the yeast oxysterol-binding protein homologues.</title>
        <authorList>
            <person name="Beh C.T."/>
            <person name="Cool L."/>
            <person name="Phillips J."/>
            <person name="Rine J."/>
        </authorList>
    </citation>
    <scope>GENETIC ANALYSIS</scope>
</reference>
<reference key="5">
    <citation type="journal article" date="2003" name="EMBO J.">
        <title>A conserved ER targeting motif in three families of lipid binding proteins and in Opi1p binds VAP.</title>
        <authorList>
            <person name="Loewen C.J.R."/>
            <person name="Roy A."/>
            <person name="Levine T.P."/>
        </authorList>
    </citation>
    <scope>DOMAIN FFAT MOTIF</scope>
    <scope>SUBCELLULAR LOCATION</scope>
</reference>
<reference key="6">
    <citation type="journal article" date="2003" name="Nature">
        <title>Global analysis of protein expression in yeast.</title>
        <authorList>
            <person name="Ghaemmaghami S."/>
            <person name="Huh W.-K."/>
            <person name="Bower K."/>
            <person name="Howson R.W."/>
            <person name="Belle A."/>
            <person name="Dephoure N."/>
            <person name="O'Shea E.K."/>
            <person name="Weissman J.S."/>
        </authorList>
    </citation>
    <scope>LEVEL OF PROTEIN EXPRESSION [LARGE SCALE ANALYSIS]</scope>
</reference>
<reference key="7">
    <citation type="journal article" date="2004" name="J. Cell Sci.">
        <title>A role for yeast oxysterol-binding protein homologs in endocytosis and in the maintenance of intracellular sterol-lipid distribution.</title>
        <authorList>
            <person name="Beh C.T."/>
            <person name="Rine J."/>
        </authorList>
    </citation>
    <scope>FUNCTION</scope>
</reference>
<reference key="8">
    <citation type="journal article" date="2004" name="Mol. Cell">
        <title>Genome-wide analysis of membrane targeting by S.cerevisiae pleckstrin homology domains.</title>
        <authorList>
            <person name="Yu J.W."/>
            <person name="Mendrola J.M."/>
            <person name="Audhya A."/>
            <person name="Singh S."/>
            <person name="Keleti D."/>
            <person name="DeWald D.B."/>
            <person name="Murray D."/>
            <person name="Emr S.D."/>
            <person name="Lemmon M.A."/>
        </authorList>
    </citation>
    <scope>DOMAIN</scope>
</reference>
<reference key="9">
    <citation type="journal article" date="2005" name="Mol. Cell. Proteomics">
        <title>Quantitative phosphoproteomics applied to the yeast pheromone signaling pathway.</title>
        <authorList>
            <person name="Gruhler A."/>
            <person name="Olsen J.V."/>
            <person name="Mohammed S."/>
            <person name="Mortensen P."/>
            <person name="Faergeman N.J."/>
            <person name="Mann M."/>
            <person name="Jensen O.N."/>
        </authorList>
    </citation>
    <scope>ACETYLATION [LARGE SCALE ANALYSIS] AT SER-2</scope>
    <scope>PHOSPHORYLATION [LARGE SCALE ANALYSIS] AT SER-7</scope>
    <scope>CLEAVAGE OF INITIATOR METHIONINE [LARGE SCALE ANALYSIS]</scope>
    <scope>IDENTIFICATION BY MASS SPECTROMETRY [LARGE SCALE ANALYSIS]</scope>
    <source>
        <strain>YAL6B</strain>
    </source>
</reference>
<reference key="10">
    <citation type="journal article" date="2007" name="J. Proteome Res.">
        <title>Large-scale phosphorylation analysis of alpha-factor-arrested Saccharomyces cerevisiae.</title>
        <authorList>
            <person name="Li X."/>
            <person name="Gerber S.A."/>
            <person name="Rudner A.D."/>
            <person name="Beausoleil S.A."/>
            <person name="Haas W."/>
            <person name="Villen J."/>
            <person name="Elias J.E."/>
            <person name="Gygi S.P."/>
        </authorList>
    </citation>
    <scope>IDENTIFICATION BY MASS SPECTROMETRY [LARGE SCALE ANALYSIS]</scope>
    <source>
        <strain>ADR376</strain>
    </source>
</reference>
<reference key="11">
    <citation type="journal article" date="2007" name="Proc. Natl. Acad. Sci. U.S.A.">
        <title>Analysis of phosphorylation sites on proteins from Saccharomyces cerevisiae by electron transfer dissociation (ETD) mass spectrometry.</title>
        <authorList>
            <person name="Chi A."/>
            <person name="Huttenhower C."/>
            <person name="Geer L.Y."/>
            <person name="Coon J.J."/>
            <person name="Syka J.E.P."/>
            <person name="Bai D.L."/>
            <person name="Shabanowitz J."/>
            <person name="Burke D.J."/>
            <person name="Troyanskaya O.G."/>
            <person name="Hunt D.F."/>
        </authorList>
    </citation>
    <scope>PHOSPHORYLATION [LARGE SCALE ANALYSIS] AT SER-422</scope>
    <scope>IDENTIFICATION BY MASS SPECTROMETRY [LARGE SCALE ANALYSIS]</scope>
</reference>
<reference key="12">
    <citation type="journal article" date="2008" name="Mol. Cell. Proteomics">
        <title>A multidimensional chromatography technology for in-depth phosphoproteome analysis.</title>
        <authorList>
            <person name="Albuquerque C.P."/>
            <person name="Smolka M.B."/>
            <person name="Payne S.H."/>
            <person name="Bafna V."/>
            <person name="Eng J."/>
            <person name="Zhou H."/>
        </authorList>
    </citation>
    <scope>PHOSPHORYLATION [LARGE SCALE ANALYSIS] AT SER-422; THR-488; SER-787 AND SER-1151</scope>
    <scope>IDENTIFICATION BY MASS SPECTROMETRY [LARGE SCALE ANALYSIS]</scope>
</reference>
<reference key="13">
    <citation type="journal article" date="2009" name="J. Cell Biol.">
        <title>Lipid-regulated sterol transfer between closely apposed membranes by oxysterol-binding protein homologues.</title>
        <authorList>
            <person name="Schulz T.A."/>
            <person name="Choi M.G."/>
            <person name="Raychaudhuri S."/>
            <person name="Mears J.A."/>
            <person name="Ghirlando R."/>
            <person name="Hinshaw J.E."/>
            <person name="Prinz W.A."/>
        </authorList>
    </citation>
    <scope>DOMAIN</scope>
    <scope>SUBCELLULAR LOCATION</scope>
</reference>
<reference key="14">
    <citation type="journal article" date="2009" name="Science">
        <title>Global analysis of Cdk1 substrate phosphorylation sites provides insights into evolution.</title>
        <authorList>
            <person name="Holt L.J."/>
            <person name="Tuch B.B."/>
            <person name="Villen J."/>
            <person name="Johnson A.D."/>
            <person name="Gygi S.P."/>
            <person name="Morgan D.O."/>
        </authorList>
    </citation>
    <scope>PHOSPHORYLATION [LARGE SCALE ANALYSIS] AT SER-445; SER-451; SER-455; SER-458; SER-459; SER-486; SER-512; SER-515; SER-717; THR-783; SER-787 AND SER-825</scope>
    <scope>IDENTIFICATION BY MASS SPECTROMETRY [LARGE SCALE ANALYSIS]</scope>
</reference>
<reference key="15">
    <citation type="journal article" date="2014" name="J. Cell Sci.">
        <title>Osh proteins regulate COPII-mediated vesicular transport of ceramide from the endoplasmic reticulum in budding yeast.</title>
        <authorList>
            <person name="Kajiwara K."/>
            <person name="Ikeda A."/>
            <person name="Aguilera-Romero A."/>
            <person name="Castillon G.A."/>
            <person name="Kagiwada S."/>
            <person name="Hanada K."/>
            <person name="Riezman H."/>
            <person name="Muniz M."/>
            <person name="Funato K."/>
        </authorList>
    </citation>
    <scope>FUNCTION</scope>
</reference>
<accession>Q12451</accession>
<accession>D6VRX1</accession>
<accession>P89891</accession>
<name>OSH2_YEAST</name>
<comment type="function">
    <text evidence="7 8 9">Lipid transport protein (LTP) involved in non-vesicular transfer of lipids between membranes. Functions in phosphoinositide-coupled directional transport of various lipids by carrying the lipid molecule in a hydrophobic pocket and transferring it between membranes through the cytosol. Involved in maintenance of intracellular sterol distribution and homeostasis (PubMed:15173322). Binds and transports sterol (PubMed:20008566). Plays a role in the positive regulation of vesicular transport of ceramide from the ER to the Golgi, negatively regulating COPII-mediated ER export of cargos (PubMed:24213531).</text>
</comment>
<comment type="subunit">
    <text evidence="12">Interacts with SCS2.</text>
</comment>
<comment type="interaction">
    <interactant intactId="EBI-12621">
        <id>Q12451</id>
    </interactant>
    <interactant intactId="EBI-11670">
        <id>P36006</id>
        <label>MYO3</label>
    </interactant>
    <organismsDiffer>false</organismsDiffer>
    <experiments>3</experiments>
</comment>
<comment type="interaction">
    <interactant intactId="EBI-12621">
        <id>Q12451</id>
    </interactant>
    <interactant intactId="EBI-11687">
        <id>Q04439</id>
        <label>MYO5</label>
    </interactant>
    <organismsDiffer>false</organismsDiffer>
    <experiments>6</experiments>
</comment>
<comment type="subcellular location">
    <subcellularLocation>
        <location evidence="3 4 8">Cell membrane</location>
        <topology evidence="3 4">Peripheral membrane protein</topology>
    </subcellularLocation>
    <subcellularLocation>
        <location evidence="8">Endoplasmic reticulum membrane</location>
    </subcellularLocation>
    <text evidence="8">Cell periphery, enriched in small buds of G1 phase cells and near the bud-neck region of S phase cells. Enriched on regions of the ER in close proximity with the plasma membrane (PM), which may represent PM-ER membrane contact sites (MCS) (PubMed:20008566).</text>
</comment>
<comment type="domain">
    <text evidence="6">The PH domain strongly binds to phosphoinositides and is required for targeting the protein to the membrane.</text>
</comment>
<comment type="domain">
    <text evidence="4">The FFAT (two phenylalanines in an acidic tract) motif is required for interaction with SCS2 and proper localization of the protein.</text>
</comment>
<comment type="domain">
    <text evidence="13">The OSBP-related domain (ORD) mediates binding of sterols and phospholipids. It displays an incomplete beta-barrel containing a central hydrophobic tunnel that can accommodate a single lipid molecule with a flexible lid covering the tunnel entrance. The ORD can bind two membranes simultaneously. It has at least two membrane-binding surfaces; one near the mouth of the lipid-binding pocket and a distal site that can bind a second membrane. These structural features correlate with the phosphatidylinositol 4-phosphate (PI(4)P)-coupled lipid transport optimized in closely apposed membranes, such as organelle contact sites. The lipid transfer cycle starts from the association of the LTP with a donor membrane, which accompanies conformational changes that uncover the ligand-binding pocket. The tunnel opening is generally mediated by displacement of the lid covering the binding pocket allowing uptake or release of a lipid molecule. The LTPs extract the lipid from the membrane by providing a hydrophobic environment as well as specific interaction. Dissociation from the donor membrane shifts the conformation to a closed form. Then, the LTPs loaded with a cargo lipid diffuse through the aqueous phase. Lid opening may be induced by the interaction of a hydrophobic side of the lid with the target membranes.</text>
</comment>
<comment type="miscellaneous">
    <text evidence="5">Present with 1069 molecules/cell in log phase SD medium.</text>
</comment>
<comment type="similarity">
    <text evidence="11">Belongs to the OSBP family.</text>
</comment>
<dbReference type="EMBL" id="Z74066">
    <property type="protein sequence ID" value="CAA98577.1"/>
    <property type="molecule type" value="Genomic_DNA"/>
</dbReference>
<dbReference type="EMBL" id="Z74067">
    <property type="protein sequence ID" value="CAA98578.1"/>
    <property type="molecule type" value="Genomic_DNA"/>
</dbReference>
<dbReference type="EMBL" id="Z48432">
    <property type="protein sequence ID" value="CAA88340.1"/>
    <property type="molecule type" value="Genomic_DNA"/>
</dbReference>
<dbReference type="EMBL" id="BK006938">
    <property type="protein sequence ID" value="DAA11831.1"/>
    <property type="molecule type" value="Genomic_DNA"/>
</dbReference>
<dbReference type="PIR" id="S52500">
    <property type="entry name" value="S52500"/>
</dbReference>
<dbReference type="RefSeq" id="NP_010265.1">
    <property type="nucleotide sequence ID" value="NM_001180078.1"/>
</dbReference>
<dbReference type="SMR" id="Q12451"/>
<dbReference type="BioGRID" id="32036">
    <property type="interactions" value="81"/>
</dbReference>
<dbReference type="DIP" id="DIP-6712N"/>
<dbReference type="ELM" id="Q12451"/>
<dbReference type="FunCoup" id="Q12451">
    <property type="interactions" value="596"/>
</dbReference>
<dbReference type="IntAct" id="Q12451">
    <property type="interactions" value="9"/>
</dbReference>
<dbReference type="MINT" id="Q12451"/>
<dbReference type="STRING" id="4932.YDL019C"/>
<dbReference type="GlyGen" id="Q12451">
    <property type="glycosylation" value="2 sites, 1 O-linked glycan (1 site)"/>
</dbReference>
<dbReference type="iPTMnet" id="Q12451"/>
<dbReference type="PaxDb" id="4932-YDL019C"/>
<dbReference type="PeptideAtlas" id="Q12451"/>
<dbReference type="TopDownProteomics" id="Q12451"/>
<dbReference type="EnsemblFungi" id="YDL019C_mRNA">
    <property type="protein sequence ID" value="YDL019C"/>
    <property type="gene ID" value="YDL019C"/>
</dbReference>
<dbReference type="GeneID" id="851543"/>
<dbReference type="KEGG" id="sce:YDL019C"/>
<dbReference type="AGR" id="SGD:S000002177"/>
<dbReference type="SGD" id="S000002177">
    <property type="gene designation" value="OSH2"/>
</dbReference>
<dbReference type="VEuPathDB" id="FungiDB:YDL019C"/>
<dbReference type="eggNOG" id="KOG1737">
    <property type="taxonomic scope" value="Eukaryota"/>
</dbReference>
<dbReference type="GeneTree" id="ENSGT00940000173329"/>
<dbReference type="HOGENOM" id="CLU_001040_1_1_1"/>
<dbReference type="InParanoid" id="Q12451"/>
<dbReference type="OMA" id="SIRQMWE"/>
<dbReference type="OrthoDB" id="1854502at2759"/>
<dbReference type="BioCyc" id="YEAST:G3O-29448-MONOMER"/>
<dbReference type="Reactome" id="R-SCE-192105">
    <property type="pathway name" value="Synthesis of bile acids and bile salts"/>
</dbReference>
<dbReference type="BioGRID-ORCS" id="851543">
    <property type="hits" value="2 hits in 10 CRISPR screens"/>
</dbReference>
<dbReference type="PRO" id="PR:Q12451"/>
<dbReference type="Proteomes" id="UP000002311">
    <property type="component" value="Chromosome IV"/>
</dbReference>
<dbReference type="RNAct" id="Q12451">
    <property type="molecule type" value="protein"/>
</dbReference>
<dbReference type="GO" id="GO:0071944">
    <property type="term" value="C:cell periphery"/>
    <property type="evidence" value="ECO:0007005"/>
    <property type="project" value="SGD"/>
</dbReference>
<dbReference type="GO" id="GO:0005935">
    <property type="term" value="C:cellular bud neck"/>
    <property type="evidence" value="ECO:0000314"/>
    <property type="project" value="SGD"/>
</dbReference>
<dbReference type="GO" id="GO:0032541">
    <property type="term" value="C:cortical endoplasmic reticulum"/>
    <property type="evidence" value="ECO:0000314"/>
    <property type="project" value="SGD"/>
</dbReference>
<dbReference type="GO" id="GO:0005829">
    <property type="term" value="C:cytosol"/>
    <property type="evidence" value="ECO:0000318"/>
    <property type="project" value="GO_Central"/>
</dbReference>
<dbReference type="GO" id="GO:0005783">
    <property type="term" value="C:endoplasmic reticulum"/>
    <property type="evidence" value="ECO:0000314"/>
    <property type="project" value="SGD"/>
</dbReference>
<dbReference type="GO" id="GO:0005789">
    <property type="term" value="C:endoplasmic reticulum membrane"/>
    <property type="evidence" value="ECO:0007669"/>
    <property type="project" value="UniProtKB-SubCell"/>
</dbReference>
<dbReference type="GO" id="GO:0005635">
    <property type="term" value="C:nuclear envelope"/>
    <property type="evidence" value="ECO:0000314"/>
    <property type="project" value="SGD"/>
</dbReference>
<dbReference type="GO" id="GO:0097038">
    <property type="term" value="C:perinuclear endoplasmic reticulum"/>
    <property type="evidence" value="ECO:0000318"/>
    <property type="project" value="GO_Central"/>
</dbReference>
<dbReference type="GO" id="GO:0005886">
    <property type="term" value="C:plasma membrane"/>
    <property type="evidence" value="ECO:0000314"/>
    <property type="project" value="SGD"/>
</dbReference>
<dbReference type="GO" id="GO:0008289">
    <property type="term" value="F:lipid binding"/>
    <property type="evidence" value="ECO:0000314"/>
    <property type="project" value="SGD"/>
</dbReference>
<dbReference type="GO" id="GO:0032934">
    <property type="term" value="F:sterol binding"/>
    <property type="evidence" value="ECO:0000318"/>
    <property type="project" value="GO_Central"/>
</dbReference>
<dbReference type="GO" id="GO:0120015">
    <property type="term" value="F:sterol transfer activity"/>
    <property type="evidence" value="ECO:0000314"/>
    <property type="project" value="SGD"/>
</dbReference>
<dbReference type="GO" id="GO:0006897">
    <property type="term" value="P:endocytosis"/>
    <property type="evidence" value="ECO:0000316"/>
    <property type="project" value="SGD"/>
</dbReference>
<dbReference type="GO" id="GO:0035621">
    <property type="term" value="P:ER to Golgi ceramide transport"/>
    <property type="evidence" value="ECO:0000315"/>
    <property type="project" value="SGD"/>
</dbReference>
<dbReference type="GO" id="GO:0006887">
    <property type="term" value="P:exocytosis"/>
    <property type="evidence" value="ECO:0000316"/>
    <property type="project" value="SGD"/>
</dbReference>
<dbReference type="GO" id="GO:0030011">
    <property type="term" value="P:maintenance of cell polarity"/>
    <property type="evidence" value="ECO:0000316"/>
    <property type="project" value="SGD"/>
</dbReference>
<dbReference type="GO" id="GO:0034727">
    <property type="term" value="P:piecemeal microautophagy of the nucleus"/>
    <property type="evidence" value="ECO:0000316"/>
    <property type="project" value="SGD"/>
</dbReference>
<dbReference type="GO" id="GO:0061709">
    <property type="term" value="P:reticulophagy"/>
    <property type="evidence" value="ECO:0000316"/>
    <property type="project" value="SGD"/>
</dbReference>
<dbReference type="GO" id="GO:0015918">
    <property type="term" value="P:sterol transport"/>
    <property type="evidence" value="ECO:0000314"/>
    <property type="project" value="SGD"/>
</dbReference>
<dbReference type="CDD" id="cd13292">
    <property type="entry name" value="PH_Osh1p_Osh2p_yeast"/>
    <property type="match status" value="1"/>
</dbReference>
<dbReference type="FunFam" id="2.40.160.120:FF:000008">
    <property type="entry name" value="Oxysterol binding protein (Osh1)"/>
    <property type="match status" value="1"/>
</dbReference>
<dbReference type="FunFam" id="3.30.70.3490:FF:000010">
    <property type="entry name" value="Oxysterol binding protein (Osh1)"/>
    <property type="match status" value="1"/>
</dbReference>
<dbReference type="FunFam" id="1.25.40.20:FF:000308">
    <property type="entry name" value="Oxysterol-binding family protein"/>
    <property type="match status" value="1"/>
</dbReference>
<dbReference type="Gene3D" id="2.40.160.120">
    <property type="match status" value="1"/>
</dbReference>
<dbReference type="Gene3D" id="3.30.70.3490">
    <property type="match status" value="1"/>
</dbReference>
<dbReference type="Gene3D" id="1.25.40.20">
    <property type="entry name" value="Ankyrin repeat-containing domain"/>
    <property type="match status" value="2"/>
</dbReference>
<dbReference type="Gene3D" id="2.30.29.30">
    <property type="entry name" value="Pleckstrin-homology domain (PH domain)/Phosphotyrosine-binding domain (PTB)"/>
    <property type="match status" value="1"/>
</dbReference>
<dbReference type="InterPro" id="IPR002110">
    <property type="entry name" value="Ankyrin_rpt"/>
</dbReference>
<dbReference type="InterPro" id="IPR036770">
    <property type="entry name" value="Ankyrin_rpt-contain_sf"/>
</dbReference>
<dbReference type="InterPro" id="IPR037239">
    <property type="entry name" value="OSBP_sf"/>
</dbReference>
<dbReference type="InterPro" id="IPR000648">
    <property type="entry name" value="Oxysterol-bd"/>
</dbReference>
<dbReference type="InterPro" id="IPR018494">
    <property type="entry name" value="Oxysterol-bd_CS"/>
</dbReference>
<dbReference type="InterPro" id="IPR011993">
    <property type="entry name" value="PH-like_dom_sf"/>
</dbReference>
<dbReference type="InterPro" id="IPR001849">
    <property type="entry name" value="PH_domain"/>
</dbReference>
<dbReference type="PANTHER" id="PTHR10972:SF205">
    <property type="entry name" value="OXYSTEROL-BINDING PROTEIN 1"/>
    <property type="match status" value="1"/>
</dbReference>
<dbReference type="PANTHER" id="PTHR10972">
    <property type="entry name" value="OXYSTEROL-BINDING PROTEIN-RELATED"/>
    <property type="match status" value="1"/>
</dbReference>
<dbReference type="Pfam" id="PF13637">
    <property type="entry name" value="Ank_4"/>
    <property type="match status" value="1"/>
</dbReference>
<dbReference type="Pfam" id="PF01237">
    <property type="entry name" value="Oxysterol_BP"/>
    <property type="match status" value="1"/>
</dbReference>
<dbReference type="Pfam" id="PF00169">
    <property type="entry name" value="PH"/>
    <property type="match status" value="1"/>
</dbReference>
<dbReference type="SMART" id="SM00248">
    <property type="entry name" value="ANK"/>
    <property type="match status" value="2"/>
</dbReference>
<dbReference type="SMART" id="SM00233">
    <property type="entry name" value="PH"/>
    <property type="match status" value="1"/>
</dbReference>
<dbReference type="SUPFAM" id="SSF48403">
    <property type="entry name" value="Ankyrin repeat"/>
    <property type="match status" value="1"/>
</dbReference>
<dbReference type="SUPFAM" id="SSF144000">
    <property type="entry name" value="Oxysterol-binding protein-like"/>
    <property type="match status" value="1"/>
</dbReference>
<dbReference type="SUPFAM" id="SSF50729">
    <property type="entry name" value="PH domain-like"/>
    <property type="match status" value="1"/>
</dbReference>
<dbReference type="PROSITE" id="PS50297">
    <property type="entry name" value="ANK_REP_REGION"/>
    <property type="match status" value="2"/>
</dbReference>
<dbReference type="PROSITE" id="PS50088">
    <property type="entry name" value="ANK_REPEAT"/>
    <property type="match status" value="1"/>
</dbReference>
<dbReference type="PROSITE" id="PS01013">
    <property type="entry name" value="OSBP"/>
    <property type="match status" value="1"/>
</dbReference>
<dbReference type="PROSITE" id="PS50003">
    <property type="entry name" value="PH_DOMAIN"/>
    <property type="match status" value="1"/>
</dbReference>
<protein>
    <recommendedName>
        <fullName evidence="10">Oxysterol-binding protein homolog 2</fullName>
    </recommendedName>
    <alternativeName>
        <fullName>Oxysterol-binding protein-related protein 2</fullName>
        <shortName>ORP 2</shortName>
        <shortName>OSBP-related protein 2</shortName>
    </alternativeName>
</protein>
<organism>
    <name type="scientific">Saccharomyces cerevisiae (strain ATCC 204508 / S288c)</name>
    <name type="common">Baker's yeast</name>
    <dbReference type="NCBI Taxonomy" id="559292"/>
    <lineage>
        <taxon>Eukaryota</taxon>
        <taxon>Fungi</taxon>
        <taxon>Dikarya</taxon>
        <taxon>Ascomycota</taxon>
        <taxon>Saccharomycotina</taxon>
        <taxon>Saccharomycetes</taxon>
        <taxon>Saccharomycetales</taxon>
        <taxon>Saccharomycetaceae</taxon>
        <taxon>Saccharomyces</taxon>
    </lineage>
</organism>
<sequence>MSREDLSIAEDLNQVSKPLLKVKLLEVLGQGDFKHLKALVDNEFQPKDDPSVQQVLNLILHYAVQVAPILLIKEIVAHWVDQVGDEKSSSKSDDGIHLDLNYQDENGNTPLHLAAAQSRSDVISFLLSQKSINDCVKNKAHQQPLDMCKDLNVAQMIQLKRDDYFLETVHSLRAAMNKRDFSKLDSIWKNPRNLNLLDINGIDPETGTTLLYEYSQKKDIEMCQWLLKHGAEATVKDGKGRSPLDLVKNIKLPAKPSNNVTPEIKLKNLLEKNLREQAIVHEDVASSKPPTYKGFLKKWTNFAHGYKLRWFILSGDGNLSYYKDQSHVDRPRGTLKVSTCRLHIDSSEKLNFELLGGITGTTRWRLKGNHPIETTRWVNAIQSAIRFAKDKEILNKKKAVPPSLALKNKSPALISHSKTQGSLPEASQYYQHTLHKEVIQPSSVSLYRRPSNNLSVVSSEIQLNDNLTESGKRFVSKMIENRLDGSKTPVGVHTGSALQRVRSSNTLKSNRSMQSGSGVASPIDKVPNGANLSQSNTTTGSTASLSDNNYIDNFEGDEANSDDEEEDLGINFDRDEEYIKAQYGPYKEKLDMYEQAISIELSSLIELIEQEEPSPEVWLTIKKSLINTSTIFGKLKDLTYKRDKRLVDMVSKQGDVNNVWVQSVKELEMELSNKTERLASIDKERRGLKKILHKKLLESHATAGNKESLENDKEQESDTTASTLGQIAKFISATKEEDEASDADEFYDAAELVDEVTELTEAHPEISTAAAPKHAPPPVPNETDNDSQYVQDEKSKIESNVEKTSQKFEKQNNLVTEDEPKTDQSLKNFKAEDKESQVKEKTKEIASSVIGEKTIVAVTTVQKRKEEYLLKEGSYLGYEDGIRKRLSMDKDDRPKISLWAVLKSMVGKDMTRMTLPVTFNEPTSLLQRVAEDLEYSELLDQAATFEDSTLRTLYVAAFTASSYASTTKRVAKPFNPLLGETFEYSRPDKQYRFFTEQVSHHPPISATWTESPRWDFWGESFVDTKFNGRSFNVKHLGLWHIKLRPNDNEKEELYTWKKPNNTVIGILIGNPQVDNHGEVNVVNHTTGDHCKLYFKARGWRSSGAYEITGEVYNKKKQKVWILGGHWNEAIFAKKVVKDGDLSLEKTRTAASAGNGPTDDGTKFLIWKANDRPEEPFNLTPFAITLNAPQPHLLPWLPPTDTRLRPDQRAMEDGRYDEAGDEKFRVEEKQRAARRKREENNLEYHPQWFVRDTHPITKAKYWRYTGKYWVKRRDHDLKDCGDIF</sequence>